<sequence length="327" mass="35556">MQNVLKSFLTPKNIQVQTISPCHFRILLEPLERGFGHTLGNALRRILLSSMPGAAIVQAEIDGVLHEYSSIEGVREDVVDVLLNLKGVAIKLEGREDAKLTLHKKGAGTVTAGDIQTESGVKIVNPDHVIAHITKDGEINMTLKAAMGRGYEPSSARSTGDQSRSVGLLLLDASYSPIRRVTYSVENARVEKRTDLDKLIIDLETDGTLDPEEAIRFAAAVLQHQLAAFVDLKQESDRDGGGKEGKVNPLLLRPVEDLELTVRAANCLKAESINYIGDLVQCTENDLLKTPNLGKKSLLEIKSVLAQKGLSLGMDLKGWPPADLTDQ</sequence>
<protein>
    <recommendedName>
        <fullName evidence="1">DNA-directed RNA polymerase subunit alpha</fullName>
        <shortName evidence="1">RNAP subunit alpha</shortName>
        <ecNumber evidence="1">2.7.7.6</ecNumber>
    </recommendedName>
    <alternativeName>
        <fullName evidence="1">RNA polymerase subunit alpha</fullName>
    </alternativeName>
    <alternativeName>
        <fullName evidence="1">Transcriptase subunit alpha</fullName>
    </alternativeName>
</protein>
<organism>
    <name type="scientific">Coxiella burnetii (strain RSA 331 / Henzerling II)</name>
    <dbReference type="NCBI Taxonomy" id="360115"/>
    <lineage>
        <taxon>Bacteria</taxon>
        <taxon>Pseudomonadati</taxon>
        <taxon>Pseudomonadota</taxon>
        <taxon>Gammaproteobacteria</taxon>
        <taxon>Legionellales</taxon>
        <taxon>Coxiellaceae</taxon>
        <taxon>Coxiella</taxon>
    </lineage>
</organism>
<feature type="chain" id="PRO_1000075008" description="DNA-directed RNA polymerase subunit alpha">
    <location>
        <begin position="1"/>
        <end position="327"/>
    </location>
</feature>
<feature type="region of interest" description="Alpha N-terminal domain (alpha-NTD)" evidence="1">
    <location>
        <begin position="1"/>
        <end position="233"/>
    </location>
</feature>
<feature type="region of interest" description="Alpha C-terminal domain (alpha-CTD)" evidence="1">
    <location>
        <begin position="247"/>
        <end position="327"/>
    </location>
</feature>
<evidence type="ECO:0000255" key="1">
    <source>
        <dbReference type="HAMAP-Rule" id="MF_00059"/>
    </source>
</evidence>
<gene>
    <name evidence="1" type="primary">rpoA</name>
    <name type="ordered locus">COXBURSA331_A0362</name>
</gene>
<dbReference type="EC" id="2.7.7.6" evidence="1"/>
<dbReference type="EMBL" id="CP000890">
    <property type="protein sequence ID" value="ABX78390.1"/>
    <property type="molecule type" value="Genomic_DNA"/>
</dbReference>
<dbReference type="RefSeq" id="WP_005771496.1">
    <property type="nucleotide sequence ID" value="NC_010117.1"/>
</dbReference>
<dbReference type="SMR" id="A9NAZ5"/>
<dbReference type="KEGG" id="cbs:COXBURSA331_A0362"/>
<dbReference type="HOGENOM" id="CLU_053084_0_0_6"/>
<dbReference type="GO" id="GO:0005737">
    <property type="term" value="C:cytoplasm"/>
    <property type="evidence" value="ECO:0007669"/>
    <property type="project" value="UniProtKB-ARBA"/>
</dbReference>
<dbReference type="GO" id="GO:0000428">
    <property type="term" value="C:DNA-directed RNA polymerase complex"/>
    <property type="evidence" value="ECO:0007669"/>
    <property type="project" value="UniProtKB-KW"/>
</dbReference>
<dbReference type="GO" id="GO:0003677">
    <property type="term" value="F:DNA binding"/>
    <property type="evidence" value="ECO:0007669"/>
    <property type="project" value="UniProtKB-UniRule"/>
</dbReference>
<dbReference type="GO" id="GO:0003899">
    <property type="term" value="F:DNA-directed RNA polymerase activity"/>
    <property type="evidence" value="ECO:0007669"/>
    <property type="project" value="UniProtKB-UniRule"/>
</dbReference>
<dbReference type="GO" id="GO:0046983">
    <property type="term" value="F:protein dimerization activity"/>
    <property type="evidence" value="ECO:0007669"/>
    <property type="project" value="InterPro"/>
</dbReference>
<dbReference type="GO" id="GO:0006351">
    <property type="term" value="P:DNA-templated transcription"/>
    <property type="evidence" value="ECO:0007669"/>
    <property type="project" value="UniProtKB-UniRule"/>
</dbReference>
<dbReference type="CDD" id="cd06928">
    <property type="entry name" value="RNAP_alpha_NTD"/>
    <property type="match status" value="1"/>
</dbReference>
<dbReference type="FunFam" id="1.10.150.20:FF:000001">
    <property type="entry name" value="DNA-directed RNA polymerase subunit alpha"/>
    <property type="match status" value="1"/>
</dbReference>
<dbReference type="FunFam" id="2.170.120.12:FF:000001">
    <property type="entry name" value="DNA-directed RNA polymerase subunit alpha"/>
    <property type="match status" value="1"/>
</dbReference>
<dbReference type="Gene3D" id="1.10.150.20">
    <property type="entry name" value="5' to 3' exonuclease, C-terminal subdomain"/>
    <property type="match status" value="1"/>
</dbReference>
<dbReference type="Gene3D" id="2.170.120.12">
    <property type="entry name" value="DNA-directed RNA polymerase, insert domain"/>
    <property type="match status" value="1"/>
</dbReference>
<dbReference type="Gene3D" id="3.30.1360.10">
    <property type="entry name" value="RNA polymerase, RBP11-like subunit"/>
    <property type="match status" value="1"/>
</dbReference>
<dbReference type="HAMAP" id="MF_00059">
    <property type="entry name" value="RNApol_bact_RpoA"/>
    <property type="match status" value="1"/>
</dbReference>
<dbReference type="InterPro" id="IPR011262">
    <property type="entry name" value="DNA-dir_RNA_pol_insert"/>
</dbReference>
<dbReference type="InterPro" id="IPR011263">
    <property type="entry name" value="DNA-dir_RNA_pol_RpoA/D/Rpb3"/>
</dbReference>
<dbReference type="InterPro" id="IPR011773">
    <property type="entry name" value="DNA-dir_RpoA"/>
</dbReference>
<dbReference type="InterPro" id="IPR036603">
    <property type="entry name" value="RBP11-like"/>
</dbReference>
<dbReference type="InterPro" id="IPR011260">
    <property type="entry name" value="RNAP_asu_C"/>
</dbReference>
<dbReference type="InterPro" id="IPR036643">
    <property type="entry name" value="RNApol_insert_sf"/>
</dbReference>
<dbReference type="NCBIfam" id="NF003513">
    <property type="entry name" value="PRK05182.1-2"/>
    <property type="match status" value="1"/>
</dbReference>
<dbReference type="NCBIfam" id="NF003519">
    <property type="entry name" value="PRK05182.2-5"/>
    <property type="match status" value="1"/>
</dbReference>
<dbReference type="NCBIfam" id="TIGR02027">
    <property type="entry name" value="rpoA"/>
    <property type="match status" value="1"/>
</dbReference>
<dbReference type="Pfam" id="PF01000">
    <property type="entry name" value="RNA_pol_A_bac"/>
    <property type="match status" value="1"/>
</dbReference>
<dbReference type="Pfam" id="PF03118">
    <property type="entry name" value="RNA_pol_A_CTD"/>
    <property type="match status" value="1"/>
</dbReference>
<dbReference type="Pfam" id="PF01193">
    <property type="entry name" value="RNA_pol_L"/>
    <property type="match status" value="1"/>
</dbReference>
<dbReference type="SMART" id="SM00662">
    <property type="entry name" value="RPOLD"/>
    <property type="match status" value="1"/>
</dbReference>
<dbReference type="SUPFAM" id="SSF47789">
    <property type="entry name" value="C-terminal domain of RNA polymerase alpha subunit"/>
    <property type="match status" value="1"/>
</dbReference>
<dbReference type="SUPFAM" id="SSF56553">
    <property type="entry name" value="Insert subdomain of RNA polymerase alpha subunit"/>
    <property type="match status" value="1"/>
</dbReference>
<dbReference type="SUPFAM" id="SSF55257">
    <property type="entry name" value="RBP11-like subunits of RNA polymerase"/>
    <property type="match status" value="1"/>
</dbReference>
<keyword id="KW-0240">DNA-directed RNA polymerase</keyword>
<keyword id="KW-0548">Nucleotidyltransferase</keyword>
<keyword id="KW-0804">Transcription</keyword>
<keyword id="KW-0808">Transferase</keyword>
<proteinExistence type="inferred from homology"/>
<reference key="1">
    <citation type="submission" date="2007-11" db="EMBL/GenBank/DDBJ databases">
        <title>Genome sequencing of phylogenetically and phenotypically diverse Coxiella burnetii isolates.</title>
        <authorList>
            <person name="Seshadri R."/>
            <person name="Samuel J.E."/>
        </authorList>
    </citation>
    <scope>NUCLEOTIDE SEQUENCE [LARGE SCALE GENOMIC DNA]</scope>
    <source>
        <strain>RSA 331 / Henzerling II</strain>
    </source>
</reference>
<comment type="function">
    <text evidence="1">DNA-dependent RNA polymerase catalyzes the transcription of DNA into RNA using the four ribonucleoside triphosphates as substrates.</text>
</comment>
<comment type="catalytic activity">
    <reaction evidence="1">
        <text>RNA(n) + a ribonucleoside 5'-triphosphate = RNA(n+1) + diphosphate</text>
        <dbReference type="Rhea" id="RHEA:21248"/>
        <dbReference type="Rhea" id="RHEA-COMP:14527"/>
        <dbReference type="Rhea" id="RHEA-COMP:17342"/>
        <dbReference type="ChEBI" id="CHEBI:33019"/>
        <dbReference type="ChEBI" id="CHEBI:61557"/>
        <dbReference type="ChEBI" id="CHEBI:140395"/>
        <dbReference type="EC" id="2.7.7.6"/>
    </reaction>
</comment>
<comment type="subunit">
    <text evidence="1">Homodimer. The RNAP catalytic core consists of 2 alpha, 1 beta, 1 beta' and 1 omega subunit. When a sigma factor is associated with the core the holoenzyme is formed, which can initiate transcription.</text>
</comment>
<comment type="domain">
    <text evidence="1">The N-terminal domain is essential for RNAP assembly and basal transcription, whereas the C-terminal domain is involved in interaction with transcriptional regulators and with upstream promoter elements.</text>
</comment>
<comment type="similarity">
    <text evidence="1">Belongs to the RNA polymerase alpha chain family.</text>
</comment>
<accession>A9NAZ5</accession>
<name>RPOA_COXBR</name>